<evidence type="ECO:0000250" key="1"/>
<evidence type="ECO:0000250" key="2">
    <source>
        <dbReference type="UniProtKB" id="P63208"/>
    </source>
</evidence>
<evidence type="ECO:0000250" key="3">
    <source>
        <dbReference type="UniProtKB" id="Q9WTX5"/>
    </source>
</evidence>
<evidence type="ECO:0000256" key="4">
    <source>
        <dbReference type="SAM" id="MobiDB-lite"/>
    </source>
</evidence>
<evidence type="ECO:0000305" key="5"/>
<evidence type="ECO:0007829" key="6">
    <source>
        <dbReference type="PDB" id="8ZUH"/>
    </source>
</evidence>
<reference key="1">
    <citation type="journal article" date="2005" name="BMC Genomics">
        <title>Characterization of 954 bovine full-CDS cDNA sequences.</title>
        <authorList>
            <person name="Harhay G.P."/>
            <person name="Sonstegard T.S."/>
            <person name="Keele J.W."/>
            <person name="Heaton M.P."/>
            <person name="Clawson M.L."/>
            <person name="Snelling W.M."/>
            <person name="Wiedmann R.T."/>
            <person name="Van Tassell C.P."/>
            <person name="Smith T.P.L."/>
        </authorList>
    </citation>
    <scope>NUCLEOTIDE SEQUENCE [LARGE SCALE MRNA]</scope>
</reference>
<reference key="2">
    <citation type="submission" date="2005-08" db="EMBL/GenBank/DDBJ databases">
        <authorList>
            <consortium name="NIH - Mammalian Gene Collection (MGC) project"/>
        </authorList>
    </citation>
    <scope>NUCLEOTIDE SEQUENCE [LARGE SCALE MRNA]</scope>
    <source>
        <strain>Crossbred X Angus</strain>
        <tissue>Ileum</tissue>
    </source>
</reference>
<name>SKP1_BOVIN</name>
<proteinExistence type="evidence at protein level"/>
<accession>Q3ZCF3</accession>
<gene>
    <name type="primary">SKP1</name>
    <name type="synonym">SKP1A</name>
</gene>
<feature type="chain" id="PRO_0000288490" description="S-phase kinase-associated protein 1">
    <location>
        <begin position="1"/>
        <end position="163"/>
    </location>
</feature>
<feature type="region of interest" description="Disordered" evidence="4">
    <location>
        <begin position="63"/>
        <end position="83"/>
    </location>
</feature>
<feature type="region of interest" description="Interaction with the F-box domain of F-box proteins" evidence="1">
    <location>
        <begin position="104"/>
        <end position="163"/>
    </location>
</feature>
<feature type="modified residue" description="Phosphothreonine" evidence="2">
    <location>
        <position position="131"/>
    </location>
</feature>
<feature type="cross-link" description="Glycyl lysine isopeptide (Lys-Gly) (interchain with G-Cter in SUMO1)" evidence="2">
    <location>
        <position position="142"/>
    </location>
</feature>
<feature type="strand" evidence="6">
    <location>
        <begin position="3"/>
        <end position="7"/>
    </location>
</feature>
<feature type="strand" evidence="6">
    <location>
        <begin position="13"/>
        <end position="17"/>
    </location>
</feature>
<feature type="helix" evidence="6">
    <location>
        <begin position="18"/>
        <end position="21"/>
    </location>
</feature>
<feature type="helix" evidence="6">
    <location>
        <begin position="25"/>
        <end position="33"/>
    </location>
</feature>
<feature type="helix" evidence="6">
    <location>
        <begin position="52"/>
        <end position="64"/>
    </location>
</feature>
<feature type="helix" evidence="6">
    <location>
        <begin position="87"/>
        <end position="92"/>
    </location>
</feature>
<feature type="helix" evidence="6">
    <location>
        <begin position="97"/>
        <end position="110"/>
    </location>
</feature>
<feature type="helix" evidence="6">
    <location>
        <begin position="113"/>
        <end position="127"/>
    </location>
</feature>
<feature type="helix" evidence="6">
    <location>
        <begin position="132"/>
        <end position="139"/>
    </location>
</feature>
<feature type="helix" evidence="6">
    <location>
        <begin position="148"/>
        <end position="157"/>
    </location>
</feature>
<organism>
    <name type="scientific">Bos taurus</name>
    <name type="common">Bovine</name>
    <dbReference type="NCBI Taxonomy" id="9913"/>
    <lineage>
        <taxon>Eukaryota</taxon>
        <taxon>Metazoa</taxon>
        <taxon>Chordata</taxon>
        <taxon>Craniata</taxon>
        <taxon>Vertebrata</taxon>
        <taxon>Euteleostomi</taxon>
        <taxon>Mammalia</taxon>
        <taxon>Eutheria</taxon>
        <taxon>Laurasiatheria</taxon>
        <taxon>Artiodactyla</taxon>
        <taxon>Ruminantia</taxon>
        <taxon>Pecora</taxon>
        <taxon>Bovidae</taxon>
        <taxon>Bovinae</taxon>
        <taxon>Bos</taxon>
    </lineage>
</organism>
<protein>
    <recommendedName>
        <fullName>S-phase kinase-associated protein 1</fullName>
    </recommendedName>
    <alternativeName>
        <fullName>Cyclin-A/CDK2-associated protein p19</fullName>
    </alternativeName>
    <alternativeName>
        <fullName>S-phase kinase-associated protein 1A</fullName>
    </alternativeName>
    <alternativeName>
        <fullName>p19A</fullName>
    </alternativeName>
    <alternativeName>
        <fullName>p19skp1</fullName>
    </alternativeName>
</protein>
<dbReference type="EMBL" id="BT029901">
    <property type="protein sequence ID" value="ABM06147.1"/>
    <property type="molecule type" value="mRNA"/>
</dbReference>
<dbReference type="EMBL" id="BC102435">
    <property type="protein sequence ID" value="AAI02436.1"/>
    <property type="molecule type" value="mRNA"/>
</dbReference>
<dbReference type="RefSeq" id="NP_001029953.1">
    <property type="nucleotide sequence ID" value="NM_001034781.2"/>
</dbReference>
<dbReference type="PDB" id="8ZUH">
    <property type="method" value="X-ray"/>
    <property type="resolution" value="3.20 A"/>
    <property type="chains" value="B=1-163"/>
</dbReference>
<dbReference type="PDBsum" id="8ZUH"/>
<dbReference type="SMR" id="Q3ZCF3"/>
<dbReference type="FunCoup" id="Q3ZCF3">
    <property type="interactions" value="3667"/>
</dbReference>
<dbReference type="STRING" id="9913.ENSBTAP00000035184"/>
<dbReference type="PaxDb" id="9913-ENSBTAP00000035184"/>
<dbReference type="PeptideAtlas" id="Q3ZCF3"/>
<dbReference type="Ensembl" id="ENSBTAT00000121989.1">
    <property type="protein sequence ID" value="ENSBTAP00000095387.1"/>
    <property type="gene ID" value="ENSBTAG00000025191.6"/>
</dbReference>
<dbReference type="GeneID" id="615427"/>
<dbReference type="KEGG" id="bta:615427"/>
<dbReference type="CTD" id="6500"/>
<dbReference type="VEuPathDB" id="HostDB:ENSBTAG00000025191"/>
<dbReference type="eggNOG" id="KOG1724">
    <property type="taxonomic scope" value="Eukaryota"/>
</dbReference>
<dbReference type="GeneTree" id="ENSGT00390000012652"/>
<dbReference type="HOGENOM" id="CLU_059252_7_0_1"/>
<dbReference type="InParanoid" id="Q3ZCF3"/>
<dbReference type="OMA" id="DKYTASM"/>
<dbReference type="OrthoDB" id="9711487at2759"/>
<dbReference type="TreeFam" id="TF354233"/>
<dbReference type="Reactome" id="R-BTA-1169091">
    <property type="pathway name" value="Activation of NF-kappaB in B cells"/>
</dbReference>
<dbReference type="Reactome" id="R-BTA-174113">
    <property type="pathway name" value="SCF-beta-TrCP mediated degradation of Emi1"/>
</dbReference>
<dbReference type="Reactome" id="R-BTA-187577">
    <property type="pathway name" value="SCF(Skp2)-mediated degradation of p27/p21"/>
</dbReference>
<dbReference type="Reactome" id="R-BTA-195253">
    <property type="pathway name" value="Degradation of beta-catenin by the destruction complex"/>
</dbReference>
<dbReference type="Reactome" id="R-BTA-202424">
    <property type="pathway name" value="Downstream TCR signaling"/>
</dbReference>
<dbReference type="Reactome" id="R-BTA-2565942">
    <property type="pathway name" value="Regulation of PLK1 Activity at G2/M Transition"/>
</dbReference>
<dbReference type="Reactome" id="R-BTA-2871837">
    <property type="pathway name" value="FCERI mediated NF-kB activation"/>
</dbReference>
<dbReference type="Reactome" id="R-BTA-5607761">
    <property type="pathway name" value="Dectin-1 mediated noncanonical NF-kB signaling"/>
</dbReference>
<dbReference type="Reactome" id="R-BTA-5607764">
    <property type="pathway name" value="CLEC7A (Dectin-1) signaling"/>
</dbReference>
<dbReference type="Reactome" id="R-BTA-5610780">
    <property type="pathway name" value="Degradation of GLI1 by the proteasome"/>
</dbReference>
<dbReference type="Reactome" id="R-BTA-5610785">
    <property type="pathway name" value="GLI3 is processed to GLI3R by the proteasome"/>
</dbReference>
<dbReference type="Reactome" id="R-BTA-5676590">
    <property type="pathway name" value="NIK--&gt;noncanonical NF-kB signaling"/>
</dbReference>
<dbReference type="Reactome" id="R-BTA-5684264">
    <property type="pathway name" value="MAP3K8 (TPL2)-dependent MAPK1/3 activation"/>
</dbReference>
<dbReference type="Reactome" id="R-BTA-68949">
    <property type="pathway name" value="Orc1 removal from chromatin"/>
</dbReference>
<dbReference type="Reactome" id="R-BTA-69231">
    <property type="pathway name" value="Cyclin D associated events in G1"/>
</dbReference>
<dbReference type="Reactome" id="R-BTA-8854050">
    <property type="pathway name" value="FBXL7 down-regulates AURKA during mitotic entry and in early mitosis"/>
</dbReference>
<dbReference type="Reactome" id="R-BTA-8939902">
    <property type="pathway name" value="Regulation of RUNX2 expression and activity"/>
</dbReference>
<dbReference type="Reactome" id="R-BTA-8951664">
    <property type="pathway name" value="Neddylation"/>
</dbReference>
<dbReference type="Reactome" id="R-BTA-9020702">
    <property type="pathway name" value="Interleukin-1 signaling"/>
</dbReference>
<dbReference type="Reactome" id="R-BTA-917937">
    <property type="pathway name" value="Iron uptake and transport"/>
</dbReference>
<dbReference type="Reactome" id="R-BTA-9708530">
    <property type="pathway name" value="Regulation of BACH1 activity"/>
</dbReference>
<dbReference type="Reactome" id="R-BTA-9762114">
    <property type="pathway name" value="GSK3B and BTRC:CUL1-mediated-degradation of NFE2L2"/>
</dbReference>
<dbReference type="Reactome" id="R-BTA-983168">
    <property type="pathway name" value="Antigen processing: Ubiquitination &amp; Proteasome degradation"/>
</dbReference>
<dbReference type="UniPathway" id="UPA00143"/>
<dbReference type="Proteomes" id="UP000009136">
    <property type="component" value="Chromosome 7"/>
</dbReference>
<dbReference type="Bgee" id="ENSBTAG00000025191">
    <property type="expression patterns" value="Expressed in oocyte and 108 other cell types or tissues"/>
</dbReference>
<dbReference type="GO" id="GO:0031467">
    <property type="term" value="C:Cul7-RING ubiquitin ligase complex"/>
    <property type="evidence" value="ECO:0000250"/>
    <property type="project" value="UniProtKB"/>
</dbReference>
<dbReference type="GO" id="GO:0005737">
    <property type="term" value="C:cytoplasm"/>
    <property type="evidence" value="ECO:0000318"/>
    <property type="project" value="GO_Central"/>
</dbReference>
<dbReference type="GO" id="GO:0005829">
    <property type="term" value="C:cytosol"/>
    <property type="evidence" value="ECO:0000250"/>
    <property type="project" value="UniProtKB"/>
</dbReference>
<dbReference type="GO" id="GO:0005634">
    <property type="term" value="C:nucleus"/>
    <property type="evidence" value="ECO:0000318"/>
    <property type="project" value="GO_Central"/>
</dbReference>
<dbReference type="GO" id="GO:0019005">
    <property type="term" value="C:SCF ubiquitin ligase complex"/>
    <property type="evidence" value="ECO:0000250"/>
    <property type="project" value="UniProtKB"/>
</dbReference>
<dbReference type="GO" id="GO:0097602">
    <property type="term" value="F:cullin family protein binding"/>
    <property type="evidence" value="ECO:0000318"/>
    <property type="project" value="GO_Central"/>
</dbReference>
<dbReference type="GO" id="GO:0016567">
    <property type="term" value="P:protein ubiquitination"/>
    <property type="evidence" value="ECO:0007669"/>
    <property type="project" value="UniProtKB-UniPathway"/>
</dbReference>
<dbReference type="GO" id="GO:0031146">
    <property type="term" value="P:SCF-dependent proteasomal ubiquitin-dependent protein catabolic process"/>
    <property type="evidence" value="ECO:0000250"/>
    <property type="project" value="UniProtKB"/>
</dbReference>
<dbReference type="CDD" id="cd18322">
    <property type="entry name" value="BTB_POZ_SKP1"/>
    <property type="match status" value="1"/>
</dbReference>
<dbReference type="FunFam" id="3.30.710.10:FF:000270">
    <property type="entry name" value="S-phase kinase-associated protein 1"/>
    <property type="match status" value="1"/>
</dbReference>
<dbReference type="Gene3D" id="3.30.710.10">
    <property type="entry name" value="Potassium Channel Kv1.1, Chain A"/>
    <property type="match status" value="1"/>
</dbReference>
<dbReference type="InterPro" id="IPR016897">
    <property type="entry name" value="SKP1"/>
</dbReference>
<dbReference type="InterPro" id="IPR001232">
    <property type="entry name" value="SKP1-like"/>
</dbReference>
<dbReference type="InterPro" id="IPR036296">
    <property type="entry name" value="SKP1-like_dim_sf"/>
</dbReference>
<dbReference type="InterPro" id="IPR011333">
    <property type="entry name" value="SKP1/BTB/POZ_sf"/>
</dbReference>
<dbReference type="InterPro" id="IPR016072">
    <property type="entry name" value="Skp1_comp_dimer"/>
</dbReference>
<dbReference type="InterPro" id="IPR016073">
    <property type="entry name" value="Skp1_comp_POZ"/>
</dbReference>
<dbReference type="PANTHER" id="PTHR11165">
    <property type="entry name" value="SKP1"/>
    <property type="match status" value="1"/>
</dbReference>
<dbReference type="Pfam" id="PF01466">
    <property type="entry name" value="Skp1"/>
    <property type="match status" value="1"/>
</dbReference>
<dbReference type="Pfam" id="PF03931">
    <property type="entry name" value="Skp1_POZ"/>
    <property type="match status" value="1"/>
</dbReference>
<dbReference type="PIRSF" id="PIRSF028729">
    <property type="entry name" value="E3_ubiquit_lig_SCF_Skp"/>
    <property type="match status" value="1"/>
</dbReference>
<dbReference type="SMART" id="SM00512">
    <property type="entry name" value="Skp1"/>
    <property type="match status" value="1"/>
</dbReference>
<dbReference type="SUPFAM" id="SSF54695">
    <property type="entry name" value="POZ domain"/>
    <property type="match status" value="1"/>
</dbReference>
<dbReference type="SUPFAM" id="SSF81382">
    <property type="entry name" value="Skp1 dimerisation domain-like"/>
    <property type="match status" value="1"/>
</dbReference>
<keyword id="KW-0002">3D-structure</keyword>
<keyword id="KW-1017">Isopeptide bond</keyword>
<keyword id="KW-0597">Phosphoprotein</keyword>
<keyword id="KW-1185">Reference proteome</keyword>
<keyword id="KW-0832">Ubl conjugation</keyword>
<keyword id="KW-0833">Ubl conjugation pathway</keyword>
<comment type="function">
    <text evidence="2">Essential component of the SCF (SKP1-CUL1-F-box protein) ubiquitin ligase complex, which mediates the ubiquitination of proteins involved in cell cycle progression, signal transduction and transcription. In the SCF complex, serves as an adapter that links the F-box protein to CUL1. The functional specificity of the SCF complex depends on the F-box protein as substrate recognition component. SCF(BTRC) and SCF(FBXW11) direct ubiquitination of CTNNB1 and participate in Wnt signaling. SCF(FBXW11) directs ubiquitination of phosphorylated NFKBIA. SCF(BTRC) directs ubiquitination of NFKBIB, NFKBIE, ATF4, SMAD3, SMAD4, CDC25A, FBXO5, CEP68 and probably NFKB2. SCF(SKP2) directs ubiquitination of phosphorylated CDKN1B/p27kip and is involved in regulation of G1/S transition. SCF(SKP2) directs ubiquitination of ORC1, CDT1, RBL2, ELF4, CDKN1A, RAG2, FOXO1A, and probably MYC and TAL1. SCF(FBXW7) directs ubiquitination of cyclin E, NOTCH1 released notch intracellular domain (NICD), and probably PSEN1. SCF(FBXW2) directs ubiquitination of GCM1. SCF(FBXO32) directs ubiquitination of MYOD1. SCF(FBXO7) directs ubiquitination of BIRC2 and DLGAP5. SCF(FBXO33) directs ubiquitination of YBX1. SCF(FBXO11) directs ubiquitination of BCL6 and DTL but does not seem to direct ubiquitination of TP53. SCF(BTRC) mediates the ubiquitination of NFKBIA at 'Lys-21' and 'Lys-22'; the degradation frees the associated NFKB1-RELA dimer to translocate into the nucleus and to activate transcription. SCF(CCNF) directs ubiquitination of CCP110. SCF(FBXL3) and SCF(FBXL21) direct ubiquitination of CRY1 and CRY2. SCF(FBXO9) directs ubiquitination of TTI1 and TELO2. SCF(FBXO10) directs ubiquitination of BCL2. Core component of the Cul7-RING(FBXW8) ubiquitin ligase complex, which mediates the ubiquitination and subsequent proteasomal degradation of target proteins. Also acts as a core component of the Cul1-RING(FBXL4) ubiquitin ligase complex, which mediates the ubiquitination and subsequent proteasomal degradation of BNIP3 and BNIP3L (By similarity).</text>
</comment>
<comment type="pathway">
    <text>Protein modification; protein ubiquitination.</text>
</comment>
<comment type="subunit">
    <text evidence="2 3">Interacts with KDM2B, forming heterodimers (By similarity). The KDM2B-SKP1 heterodimeric complex interacts with the PCGF1-BCORL heterodimeric complex to form a homotetrameric polycomb repression complex 1 (PRC1.1) (By similarity). Component of multiple SCF (SKP1-CUL1-F-box) E3 ubiquitin-protein ligase complexes formed of CUL1, SKP1, RBX1 and a variable F-box domain-containing protein as substrate-specific subunit. Component of the SCF(FBXW11) complex containing FBXW11. Component of the SCF(SKP2) complex containing SKP2, in which it interacts directly with SKP1, SKP2 and RBX1. Component of the SCF(FBXW2) complex containing FBXw2. Component of the SCF(FBXO32) complex containing FBXO32. Component of the probable SCF(FBXO7) complex containing FBXO7. Component of the SCF(FBXO10) complex containing FBXO10. Component of the SCF(FBXO11) complex containing FBXO11. Component of the SCF(FBXO25) complex containing FBXO25. Component of the SCF(FBXO33) complex containing FBXO33. Component of the probable SCF(FBXO4) complex containing FBXO4. Component of the SCF(FBXO44) complex, composed of SKP1, CUL1 and FBXO44. Component of the SCF(BTRC) complex, composed of SKP1, CUL1 and BTRC. This complex binds phosphorylated NFKBIA. Part of a SCF complex consisting of CUL1, RBX1, SKP1 and FBXO2. Component of a SCF(SKP2)-like complex containing CUL1, SKP1, TRIM21 and SKP2. Component of the SCF(FBXO17) complex, composed of SKP1, CUL1 and FBXO17. Component of the SCF(FBXO27) complex, composed of SKP1, CUL1 and FBXO27. Component of the SCF(CCNF) complex consisting of CUL1, RBX1, SKP1 and CCNF. Component of the SCF(FBXL3) complex composed of CUL1, SKP1, RBX1 and FBXL3. Component of the SCF(FBXL21) complex composed of CUL1, SKP1, RBX1 and FBXL21. Component of the SCF(FBXO9) composed of CUL1, SKP1, RBX1 and FBXO9. Component of the SCF(FBXW7) composed of CUL1, SKP1, RBX1 and FBXW7. Component of the SCF(FBXO31) complex composed of CUL1, SKP1, RBX1 and FBXO31 (By similarity). Interacts with CEP68. Interacts with NOTCH2 and FBXW15 (By similarity). The SKP1-KDM2A and SKP1-KDM2B complexes interact with UBB (By similarity). Component of the Cul7-RING(FBXW8) complex consisting of CUL7, RBX1, SKP1 and FBXW8; within the complex interacts with FBXW8 (By similarity). Interacts with BCORL1 (By similarity). Interacts with FBXL4 (By similarity).</text>
</comment>
<comment type="PTM">
    <text evidence="3">Undergoes autophagy-mediated degradation in the liver in a time-dependent manner.</text>
</comment>
<comment type="similarity">
    <text evidence="5">Belongs to the SKP1 family.</text>
</comment>
<sequence length="163" mass="18658">MPSIKLQSSDGEIFEVDVEIAKQSVTIKTMLEDLGMDDEGDDDPVPLPNVNAAILKKVIQWCTHHKDDPPPPEDDENKEKRTDDIPVWDQEFLKVDQGTLFELILAANYLDIKGLLDVTCKTVANMIKGKTPEEIRKTFNIKNDFTEEEEAQVRKENQWCEEK</sequence>